<evidence type="ECO:0000250" key="1">
    <source>
        <dbReference type="UniProtKB" id="Q5M7Z0"/>
    </source>
</evidence>
<evidence type="ECO:0000255" key="2"/>
<evidence type="ECO:0000255" key="3">
    <source>
        <dbReference type="PROSITE-ProRule" id="PRU00175"/>
    </source>
</evidence>
<evidence type="ECO:0000256" key="4">
    <source>
        <dbReference type="SAM" id="MobiDB-lite"/>
    </source>
</evidence>
<evidence type="ECO:0000269" key="5">
    <source>
    </source>
</evidence>
<evidence type="ECO:0000269" key="6">
    <source>
    </source>
</evidence>
<evidence type="ECO:0000305" key="7"/>
<feature type="chain" id="PRO_0000320636" description="E3 ubiquitin-protein ligase RNFT1">
    <location>
        <begin position="1"/>
        <end position="395"/>
    </location>
</feature>
<feature type="transmembrane region" description="Helical" evidence="2">
    <location>
        <begin position="118"/>
        <end position="138"/>
    </location>
</feature>
<feature type="transmembrane region" description="Helical" evidence="2">
    <location>
        <begin position="165"/>
        <end position="185"/>
    </location>
</feature>
<feature type="transmembrane region" description="Helical" evidence="2">
    <location>
        <begin position="193"/>
        <end position="213"/>
    </location>
</feature>
<feature type="transmembrane region" description="Helical" evidence="2">
    <location>
        <begin position="216"/>
        <end position="236"/>
    </location>
</feature>
<feature type="transmembrane region" description="Helical" evidence="2">
    <location>
        <begin position="258"/>
        <end position="278"/>
    </location>
</feature>
<feature type="transmembrane region" description="Helical" evidence="2">
    <location>
        <begin position="283"/>
        <end position="303"/>
    </location>
</feature>
<feature type="zinc finger region" description="RING-type" evidence="3">
    <location>
        <begin position="335"/>
        <end position="373"/>
    </location>
</feature>
<feature type="region of interest" description="Disordered" evidence="4">
    <location>
        <begin position="1"/>
        <end position="58"/>
    </location>
</feature>
<feature type="region of interest" description="Disordered" evidence="4">
    <location>
        <begin position="78"/>
        <end position="97"/>
    </location>
</feature>
<feature type="region of interest" description="Required for ubiquitin ligase activity and for protection against ER stress-induced cell death" evidence="1">
    <location>
        <begin position="328"/>
        <end position="379"/>
    </location>
</feature>
<feature type="sequence conflict" description="In Ref. 3; AAH50796." evidence="7" ref="3">
    <original>E</original>
    <variation>K</variation>
    <location>
        <position position="92"/>
    </location>
</feature>
<feature type="sequence conflict" description="In Ref. 1; BAE31876." evidence="7" ref="1">
    <original>A</original>
    <variation>V</variation>
    <location>
        <position position="166"/>
    </location>
</feature>
<reference key="1">
    <citation type="journal article" date="2005" name="Science">
        <title>The transcriptional landscape of the mammalian genome.</title>
        <authorList>
            <person name="Carninci P."/>
            <person name="Kasukawa T."/>
            <person name="Katayama S."/>
            <person name="Gough J."/>
            <person name="Frith M.C."/>
            <person name="Maeda N."/>
            <person name="Oyama R."/>
            <person name="Ravasi T."/>
            <person name="Lenhard B."/>
            <person name="Wells C."/>
            <person name="Kodzius R."/>
            <person name="Shimokawa K."/>
            <person name="Bajic V.B."/>
            <person name="Brenner S.E."/>
            <person name="Batalov S."/>
            <person name="Forrest A.R."/>
            <person name="Zavolan M."/>
            <person name="Davis M.J."/>
            <person name="Wilming L.G."/>
            <person name="Aidinis V."/>
            <person name="Allen J.E."/>
            <person name="Ambesi-Impiombato A."/>
            <person name="Apweiler R."/>
            <person name="Aturaliya R.N."/>
            <person name="Bailey T.L."/>
            <person name="Bansal M."/>
            <person name="Baxter L."/>
            <person name="Beisel K.W."/>
            <person name="Bersano T."/>
            <person name="Bono H."/>
            <person name="Chalk A.M."/>
            <person name="Chiu K.P."/>
            <person name="Choudhary V."/>
            <person name="Christoffels A."/>
            <person name="Clutterbuck D.R."/>
            <person name="Crowe M.L."/>
            <person name="Dalla E."/>
            <person name="Dalrymple B.P."/>
            <person name="de Bono B."/>
            <person name="Della Gatta G."/>
            <person name="di Bernardo D."/>
            <person name="Down T."/>
            <person name="Engstrom P."/>
            <person name="Fagiolini M."/>
            <person name="Faulkner G."/>
            <person name="Fletcher C.F."/>
            <person name="Fukushima T."/>
            <person name="Furuno M."/>
            <person name="Futaki S."/>
            <person name="Gariboldi M."/>
            <person name="Georgii-Hemming P."/>
            <person name="Gingeras T.R."/>
            <person name="Gojobori T."/>
            <person name="Green R.E."/>
            <person name="Gustincich S."/>
            <person name="Harbers M."/>
            <person name="Hayashi Y."/>
            <person name="Hensch T.K."/>
            <person name="Hirokawa N."/>
            <person name="Hill D."/>
            <person name="Huminiecki L."/>
            <person name="Iacono M."/>
            <person name="Ikeo K."/>
            <person name="Iwama A."/>
            <person name="Ishikawa T."/>
            <person name="Jakt M."/>
            <person name="Kanapin A."/>
            <person name="Katoh M."/>
            <person name="Kawasawa Y."/>
            <person name="Kelso J."/>
            <person name="Kitamura H."/>
            <person name="Kitano H."/>
            <person name="Kollias G."/>
            <person name="Krishnan S.P."/>
            <person name="Kruger A."/>
            <person name="Kummerfeld S.K."/>
            <person name="Kurochkin I.V."/>
            <person name="Lareau L.F."/>
            <person name="Lazarevic D."/>
            <person name="Lipovich L."/>
            <person name="Liu J."/>
            <person name="Liuni S."/>
            <person name="McWilliam S."/>
            <person name="Madan Babu M."/>
            <person name="Madera M."/>
            <person name="Marchionni L."/>
            <person name="Matsuda H."/>
            <person name="Matsuzawa S."/>
            <person name="Miki H."/>
            <person name="Mignone F."/>
            <person name="Miyake S."/>
            <person name="Morris K."/>
            <person name="Mottagui-Tabar S."/>
            <person name="Mulder N."/>
            <person name="Nakano N."/>
            <person name="Nakauchi H."/>
            <person name="Ng P."/>
            <person name="Nilsson R."/>
            <person name="Nishiguchi S."/>
            <person name="Nishikawa S."/>
            <person name="Nori F."/>
            <person name="Ohara O."/>
            <person name="Okazaki Y."/>
            <person name="Orlando V."/>
            <person name="Pang K.C."/>
            <person name="Pavan W.J."/>
            <person name="Pavesi G."/>
            <person name="Pesole G."/>
            <person name="Petrovsky N."/>
            <person name="Piazza S."/>
            <person name="Reed J."/>
            <person name="Reid J.F."/>
            <person name="Ring B.Z."/>
            <person name="Ringwald M."/>
            <person name="Rost B."/>
            <person name="Ruan Y."/>
            <person name="Salzberg S.L."/>
            <person name="Sandelin A."/>
            <person name="Schneider C."/>
            <person name="Schoenbach C."/>
            <person name="Sekiguchi K."/>
            <person name="Semple C.A."/>
            <person name="Seno S."/>
            <person name="Sessa L."/>
            <person name="Sheng Y."/>
            <person name="Shibata Y."/>
            <person name="Shimada H."/>
            <person name="Shimada K."/>
            <person name="Silva D."/>
            <person name="Sinclair B."/>
            <person name="Sperling S."/>
            <person name="Stupka E."/>
            <person name="Sugiura K."/>
            <person name="Sultana R."/>
            <person name="Takenaka Y."/>
            <person name="Taki K."/>
            <person name="Tammoja K."/>
            <person name="Tan S.L."/>
            <person name="Tang S."/>
            <person name="Taylor M.S."/>
            <person name="Tegner J."/>
            <person name="Teichmann S.A."/>
            <person name="Ueda H.R."/>
            <person name="van Nimwegen E."/>
            <person name="Verardo R."/>
            <person name="Wei C.L."/>
            <person name="Yagi K."/>
            <person name="Yamanishi H."/>
            <person name="Zabarovsky E."/>
            <person name="Zhu S."/>
            <person name="Zimmer A."/>
            <person name="Hide W."/>
            <person name="Bult C."/>
            <person name="Grimmond S.M."/>
            <person name="Teasdale R.D."/>
            <person name="Liu E.T."/>
            <person name="Brusic V."/>
            <person name="Quackenbush J."/>
            <person name="Wahlestedt C."/>
            <person name="Mattick J.S."/>
            <person name="Hume D.A."/>
            <person name="Kai C."/>
            <person name="Sasaki D."/>
            <person name="Tomaru Y."/>
            <person name="Fukuda S."/>
            <person name="Kanamori-Katayama M."/>
            <person name="Suzuki M."/>
            <person name="Aoki J."/>
            <person name="Arakawa T."/>
            <person name="Iida J."/>
            <person name="Imamura K."/>
            <person name="Itoh M."/>
            <person name="Kato T."/>
            <person name="Kawaji H."/>
            <person name="Kawagashira N."/>
            <person name="Kawashima T."/>
            <person name="Kojima M."/>
            <person name="Kondo S."/>
            <person name="Konno H."/>
            <person name="Nakano K."/>
            <person name="Ninomiya N."/>
            <person name="Nishio T."/>
            <person name="Okada M."/>
            <person name="Plessy C."/>
            <person name="Shibata K."/>
            <person name="Shiraki T."/>
            <person name="Suzuki S."/>
            <person name="Tagami M."/>
            <person name="Waki K."/>
            <person name="Watahiki A."/>
            <person name="Okamura-Oho Y."/>
            <person name="Suzuki H."/>
            <person name="Kawai J."/>
            <person name="Hayashizaki Y."/>
        </authorList>
    </citation>
    <scope>NUCLEOTIDE SEQUENCE [LARGE SCALE MRNA]</scope>
    <source>
        <strain>C57BL/6J</strain>
        <strain>NOD</strain>
        <tissue>Bone</tissue>
        <tissue>Bone marrow</tissue>
        <tissue>Kidney</tissue>
    </source>
</reference>
<reference key="2">
    <citation type="journal article" date="2009" name="PLoS Biol.">
        <title>Lineage-specific biology revealed by a finished genome assembly of the mouse.</title>
        <authorList>
            <person name="Church D.M."/>
            <person name="Goodstadt L."/>
            <person name="Hillier L.W."/>
            <person name="Zody M.C."/>
            <person name="Goldstein S."/>
            <person name="She X."/>
            <person name="Bult C.J."/>
            <person name="Agarwala R."/>
            <person name="Cherry J.L."/>
            <person name="DiCuccio M."/>
            <person name="Hlavina W."/>
            <person name="Kapustin Y."/>
            <person name="Meric P."/>
            <person name="Maglott D."/>
            <person name="Birtle Z."/>
            <person name="Marques A.C."/>
            <person name="Graves T."/>
            <person name="Zhou S."/>
            <person name="Teague B."/>
            <person name="Potamousis K."/>
            <person name="Churas C."/>
            <person name="Place M."/>
            <person name="Herschleb J."/>
            <person name="Runnheim R."/>
            <person name="Forrest D."/>
            <person name="Amos-Landgraf J."/>
            <person name="Schwartz D.C."/>
            <person name="Cheng Z."/>
            <person name="Lindblad-Toh K."/>
            <person name="Eichler E.E."/>
            <person name="Ponting C.P."/>
        </authorList>
    </citation>
    <scope>NUCLEOTIDE SEQUENCE [LARGE SCALE GENOMIC DNA]</scope>
    <source>
        <strain>C57BL/6J</strain>
    </source>
</reference>
<reference key="3">
    <citation type="journal article" date="2004" name="Genome Res.">
        <title>The status, quality, and expansion of the NIH full-length cDNA project: the Mammalian Gene Collection (MGC).</title>
        <authorList>
            <consortium name="The MGC Project Team"/>
        </authorList>
    </citation>
    <scope>NUCLEOTIDE SEQUENCE [LARGE SCALE MRNA]</scope>
    <source>
        <tissue>Testis</tissue>
    </source>
</reference>
<reference key="4">
    <citation type="journal article" date="2006" name="Fertil. Steril.">
        <title>Identification of ten novel genes involved in human spermatogenesis by microarray analysis of testicular tissue.</title>
        <authorList>
            <person name="Lin Y.H."/>
            <person name="Lin Y.M."/>
            <person name="Teng Y.N."/>
            <person name="Hsieh T.Y."/>
            <person name="Lin Y.S."/>
            <person name="Kuo P.L."/>
        </authorList>
    </citation>
    <scope>TISSUE SPECIFICITY</scope>
    <scope>DEVELOPMENTAL STAGE</scope>
</reference>
<reference key="5">
    <citation type="journal article" date="2016" name="Sci. Rep.">
        <title>Genome-wide identification and gene expression profiling of ubiquitin ligases for endoplasmic reticulum protein degradation.</title>
        <authorList>
            <person name="Kaneko M."/>
            <person name="Iwase I."/>
            <person name="Yamasaki Y."/>
            <person name="Takai T."/>
            <person name="Wu Y."/>
            <person name="Kanemoto S."/>
            <person name="Matsuhisa K."/>
            <person name="Asada R."/>
            <person name="Okuma Y."/>
            <person name="Watanabe T."/>
            <person name="Imaizumi K."/>
            <person name="Nomura Y."/>
        </authorList>
    </citation>
    <scope>TISSUE SPECIFICITY</scope>
</reference>
<comment type="function">
    <text evidence="1">E3 ubiquitin-protein ligase that acts in the endoplasmic reticulum (ER)-associated degradation (ERAD) pathway, which targets misfolded proteins that accumulate in the endoplasmic reticulum (ER) for ubiquitination and subsequent proteasome-mediated degradation. Protects cells from ER stress-induced apoptosis.</text>
</comment>
<comment type="catalytic activity">
    <reaction evidence="1">
        <text>S-ubiquitinyl-[E2 ubiquitin-conjugating enzyme]-L-cysteine + [acceptor protein]-L-lysine = [E2 ubiquitin-conjugating enzyme]-L-cysteine + N(6)-ubiquitinyl-[acceptor protein]-L-lysine.</text>
        <dbReference type="EC" id="2.3.2.27"/>
    </reaction>
</comment>
<comment type="pathway">
    <text evidence="1">Protein modification; protein ubiquitination.</text>
</comment>
<comment type="subcellular location">
    <subcellularLocation>
        <location evidence="1">Early endosome membrane</location>
        <topology evidence="7">Multi-pass membrane protein</topology>
    </subcellularLocation>
</comment>
<comment type="tissue specificity">
    <text evidence="5 6">Predominantly expressed in testis.</text>
</comment>
<comment type="developmental stage">
    <text evidence="5">Expression in testis already detected at postnatal day 1 (P1), progressively increases with adult levels reached at P20.</text>
</comment>
<name>RNFT1_MOUSE</name>
<keyword id="KW-0967">Endosome</keyword>
<keyword id="KW-0472">Membrane</keyword>
<keyword id="KW-0479">Metal-binding</keyword>
<keyword id="KW-1185">Reference proteome</keyword>
<keyword id="KW-0808">Transferase</keyword>
<keyword id="KW-0812">Transmembrane</keyword>
<keyword id="KW-1133">Transmembrane helix</keyword>
<keyword id="KW-0833">Ubl conjugation pathway</keyword>
<keyword id="KW-0862">Zinc</keyword>
<keyword id="KW-0863">Zinc-finger</keyword>
<sequence length="395" mass="45277">MQASCNQLHDPPGTAHEDAAASPCGHSRSTEGSLHPGDVHIQINSGPKEYSENPSSRNPRSGVCTCAHGCVHGRFRSYSHSEARPPDDFATESGEHGSGSFSEFRYLFKWLQKSLPYILILGIKLVMQHITGISLGIGLLTTFMYANKSIVNQVFLRERSSKLRCAWLLVFLAGSSVLLYYTFHSQSLHYSLIFLNPTLEQLSFWEVLWIVGITDFILKFFFMGLKCLILLVPSFIMPFKSKGYWYMLLEELCQYYRIFVPIPVWFRYLISYGEFGNVTTWSLGILLALLYLILKLLDFFGHLRTFRQVLRVFFTRPSYGVPASKRQCSDMDGICTICQAEFQKPVLLFCQHIFCEECITLWFNREKTCPLCRTVISECINKWKDGATSSHLQMY</sequence>
<accession>Q9DCN7</accession>
<accession>Q3U649</accession>
<accession>Q80X62</accession>
<gene>
    <name type="primary">Rnft1</name>
</gene>
<organism>
    <name type="scientific">Mus musculus</name>
    <name type="common">Mouse</name>
    <dbReference type="NCBI Taxonomy" id="10090"/>
    <lineage>
        <taxon>Eukaryota</taxon>
        <taxon>Metazoa</taxon>
        <taxon>Chordata</taxon>
        <taxon>Craniata</taxon>
        <taxon>Vertebrata</taxon>
        <taxon>Euteleostomi</taxon>
        <taxon>Mammalia</taxon>
        <taxon>Eutheria</taxon>
        <taxon>Euarchontoglires</taxon>
        <taxon>Glires</taxon>
        <taxon>Rodentia</taxon>
        <taxon>Myomorpha</taxon>
        <taxon>Muroidea</taxon>
        <taxon>Muridae</taxon>
        <taxon>Murinae</taxon>
        <taxon>Mus</taxon>
        <taxon>Mus</taxon>
    </lineage>
</organism>
<proteinExistence type="evidence at transcript level"/>
<protein>
    <recommendedName>
        <fullName evidence="7">E3 ubiquitin-protein ligase RNFT1</fullName>
        <ecNumber evidence="1">2.3.2.27</ecNumber>
    </recommendedName>
    <alternativeName>
        <fullName>RING finger and transmembrane domain-containing protein 1</fullName>
    </alternativeName>
</protein>
<dbReference type="EC" id="2.3.2.27" evidence="1"/>
<dbReference type="EMBL" id="AK002624">
    <property type="protein sequence ID" value="BAB22239.1"/>
    <property type="molecule type" value="mRNA"/>
</dbReference>
<dbReference type="EMBL" id="AK036401">
    <property type="protein sequence ID" value="BAC29412.1"/>
    <property type="molecule type" value="mRNA"/>
</dbReference>
<dbReference type="EMBL" id="AK153293">
    <property type="protein sequence ID" value="BAE31876.1"/>
    <property type="molecule type" value="mRNA"/>
</dbReference>
<dbReference type="EMBL" id="AK171077">
    <property type="protein sequence ID" value="BAE42231.1"/>
    <property type="molecule type" value="mRNA"/>
</dbReference>
<dbReference type="EMBL" id="AL604063">
    <property type="status" value="NOT_ANNOTATED_CDS"/>
    <property type="molecule type" value="Genomic_DNA"/>
</dbReference>
<dbReference type="EMBL" id="BC050796">
    <property type="protein sequence ID" value="AAH50796.1"/>
    <property type="molecule type" value="mRNA"/>
</dbReference>
<dbReference type="CCDS" id="CCDS25200.1"/>
<dbReference type="RefSeq" id="NP_084064.1">
    <property type="nucleotide sequence ID" value="NM_029788.5"/>
</dbReference>
<dbReference type="FunCoup" id="Q9DCN7">
    <property type="interactions" value="1647"/>
</dbReference>
<dbReference type="STRING" id="10090.ENSMUSP00000020827"/>
<dbReference type="iPTMnet" id="Q9DCN7"/>
<dbReference type="PhosphoSitePlus" id="Q9DCN7"/>
<dbReference type="PaxDb" id="10090-ENSMUSP00000020827"/>
<dbReference type="PeptideAtlas" id="Q9DCN7"/>
<dbReference type="ProteomicsDB" id="300561"/>
<dbReference type="Pumba" id="Q9DCN7"/>
<dbReference type="Antibodypedia" id="2746">
    <property type="antibodies" value="81 antibodies from 14 providers"/>
</dbReference>
<dbReference type="DNASU" id="76892"/>
<dbReference type="Ensembl" id="ENSMUST00000020827.7">
    <property type="protein sequence ID" value="ENSMUSP00000020827.7"/>
    <property type="gene ID" value="ENSMUSG00000020521.8"/>
</dbReference>
<dbReference type="GeneID" id="76892"/>
<dbReference type="KEGG" id="mmu:76892"/>
<dbReference type="UCSC" id="uc007ksl.1">
    <property type="organism name" value="mouse"/>
</dbReference>
<dbReference type="AGR" id="MGI:1924142"/>
<dbReference type="CTD" id="51136"/>
<dbReference type="MGI" id="MGI:1924142">
    <property type="gene designation" value="Rnft1"/>
</dbReference>
<dbReference type="VEuPathDB" id="HostDB:ENSMUSG00000020521"/>
<dbReference type="eggNOG" id="KOG0802">
    <property type="taxonomic scope" value="Eukaryota"/>
</dbReference>
<dbReference type="eggNOG" id="KOG4638">
    <property type="taxonomic scope" value="Eukaryota"/>
</dbReference>
<dbReference type="GeneTree" id="ENSGT00940000156740"/>
<dbReference type="HOGENOM" id="CLU_039460_2_1_1"/>
<dbReference type="InParanoid" id="Q9DCN7"/>
<dbReference type="OMA" id="GCIHSRL"/>
<dbReference type="OrthoDB" id="9049620at2759"/>
<dbReference type="PhylomeDB" id="Q9DCN7"/>
<dbReference type="TreeFam" id="TF331930"/>
<dbReference type="UniPathway" id="UPA00143"/>
<dbReference type="BioGRID-ORCS" id="76892">
    <property type="hits" value="9 hits in 78 CRISPR screens"/>
</dbReference>
<dbReference type="ChiTaRS" id="Rnft1">
    <property type="organism name" value="mouse"/>
</dbReference>
<dbReference type="PRO" id="PR:Q9DCN7"/>
<dbReference type="Proteomes" id="UP000000589">
    <property type="component" value="Chromosome 11"/>
</dbReference>
<dbReference type="RNAct" id="Q9DCN7">
    <property type="molecule type" value="protein"/>
</dbReference>
<dbReference type="Bgee" id="ENSMUSG00000020521">
    <property type="expression patterns" value="Expressed in spermatocyte and 255 other cell types or tissues"/>
</dbReference>
<dbReference type="GO" id="GO:0031901">
    <property type="term" value="C:early endosome membrane"/>
    <property type="evidence" value="ECO:0007669"/>
    <property type="project" value="UniProtKB-SubCell"/>
</dbReference>
<dbReference type="GO" id="GO:0005783">
    <property type="term" value="C:endoplasmic reticulum"/>
    <property type="evidence" value="ECO:0000250"/>
    <property type="project" value="UniProtKB"/>
</dbReference>
<dbReference type="GO" id="GO:0043130">
    <property type="term" value="F:ubiquitin binding"/>
    <property type="evidence" value="ECO:0000250"/>
    <property type="project" value="UniProtKB"/>
</dbReference>
<dbReference type="GO" id="GO:0061630">
    <property type="term" value="F:ubiquitin protein ligase activity"/>
    <property type="evidence" value="ECO:0000250"/>
    <property type="project" value="UniProtKB"/>
</dbReference>
<dbReference type="GO" id="GO:0008270">
    <property type="term" value="F:zinc ion binding"/>
    <property type="evidence" value="ECO:0007669"/>
    <property type="project" value="UniProtKB-KW"/>
</dbReference>
<dbReference type="GO" id="GO:1904294">
    <property type="term" value="P:positive regulation of ERAD pathway"/>
    <property type="evidence" value="ECO:0000250"/>
    <property type="project" value="UniProtKB"/>
</dbReference>
<dbReference type="GO" id="GO:0051865">
    <property type="term" value="P:protein autoubiquitination"/>
    <property type="evidence" value="ECO:0000250"/>
    <property type="project" value="UniProtKB"/>
</dbReference>
<dbReference type="FunFam" id="3.30.40.10:FF:000440">
    <property type="entry name" value="RING finger and transmembrane domain-containing protein 1"/>
    <property type="match status" value="1"/>
</dbReference>
<dbReference type="Gene3D" id="3.30.40.10">
    <property type="entry name" value="Zinc/RING finger domain, C3HC4 (zinc finger)"/>
    <property type="match status" value="1"/>
</dbReference>
<dbReference type="InterPro" id="IPR044235">
    <property type="entry name" value="RNFT1/2"/>
</dbReference>
<dbReference type="InterPro" id="IPR001841">
    <property type="entry name" value="Znf_RING"/>
</dbReference>
<dbReference type="InterPro" id="IPR013083">
    <property type="entry name" value="Znf_RING/FYVE/PHD"/>
</dbReference>
<dbReference type="InterPro" id="IPR017907">
    <property type="entry name" value="Znf_RING_CS"/>
</dbReference>
<dbReference type="PANTHER" id="PTHR15860:SF1">
    <property type="entry name" value="E3 UBIQUITIN-PROTEIN LIGASE RNFT1"/>
    <property type="match status" value="1"/>
</dbReference>
<dbReference type="PANTHER" id="PTHR15860">
    <property type="entry name" value="UNCHARACTERIZED RING FINGER-CONTAINING PROTEIN"/>
    <property type="match status" value="1"/>
</dbReference>
<dbReference type="Pfam" id="PF13639">
    <property type="entry name" value="zf-RING_2"/>
    <property type="match status" value="1"/>
</dbReference>
<dbReference type="SMART" id="SM00184">
    <property type="entry name" value="RING"/>
    <property type="match status" value="1"/>
</dbReference>
<dbReference type="SUPFAM" id="SSF57850">
    <property type="entry name" value="RING/U-box"/>
    <property type="match status" value="1"/>
</dbReference>
<dbReference type="PROSITE" id="PS00518">
    <property type="entry name" value="ZF_RING_1"/>
    <property type="match status" value="1"/>
</dbReference>
<dbReference type="PROSITE" id="PS50089">
    <property type="entry name" value="ZF_RING_2"/>
    <property type="match status" value="1"/>
</dbReference>